<gene>
    <name evidence="1" type="primary">ruvB</name>
    <name type="ordered locus">Hac_1170</name>
</gene>
<reference key="1">
    <citation type="journal article" date="2006" name="PLoS Genet.">
        <title>Who ate whom? Adaptive Helicobacter genomic changes that accompanied a host jump from early humans to large felines.</title>
        <authorList>
            <person name="Eppinger M."/>
            <person name="Baar C."/>
            <person name="Linz B."/>
            <person name="Raddatz G."/>
            <person name="Lanz C."/>
            <person name="Keller H."/>
            <person name="Morelli G."/>
            <person name="Gressmann H."/>
            <person name="Achtman M."/>
            <person name="Schuster S.C."/>
        </authorList>
    </citation>
    <scope>NUCLEOTIDE SEQUENCE [LARGE SCALE GENOMIC DNA]</scope>
    <source>
        <strain>Sheeba</strain>
    </source>
</reference>
<sequence length="336" mass="37384">MKERIVNLETLDFETSQEVSLRPDLWENYIGQEKIKNNLQISICAAKKRQESLDHMLFFGPPGLGKTSISHIIAKEMETNIKITAAPMIEKSGDLAAILTNLQAKDILFIDEIHRLSPAIEEVLYPAMEDFRLDIIIGSGPAAQTIKIDLPPFTLIGATTRVGMLSNPLRDRFGMSFRMQFYSPSELALIIKKAATKLNQDIKEESADEIAKRSRGTPRIALRLLKRVRDFALVKNSSLMDLNITLHALNELGVNELGFDEADLAYLSLLANAQGKPVGLNTIAASMREDESTIEDVIEPFLLANGYLERTAKGRIATPKTHALLKIPTLKSQSLF</sequence>
<organism>
    <name type="scientific">Helicobacter acinonychis (strain Sheeba)</name>
    <dbReference type="NCBI Taxonomy" id="382638"/>
    <lineage>
        <taxon>Bacteria</taxon>
        <taxon>Pseudomonadati</taxon>
        <taxon>Campylobacterota</taxon>
        <taxon>Epsilonproteobacteria</taxon>
        <taxon>Campylobacterales</taxon>
        <taxon>Helicobacteraceae</taxon>
        <taxon>Helicobacter</taxon>
    </lineage>
</organism>
<dbReference type="EC" id="3.6.4.-" evidence="1"/>
<dbReference type="EMBL" id="AM260522">
    <property type="protein sequence ID" value="CAJ99929.1"/>
    <property type="molecule type" value="Genomic_DNA"/>
</dbReference>
<dbReference type="RefSeq" id="WP_011578036.1">
    <property type="nucleotide sequence ID" value="NC_008229.1"/>
</dbReference>
<dbReference type="SMR" id="Q17WP7"/>
<dbReference type="STRING" id="382638.Hac_1170"/>
<dbReference type="GeneID" id="31758521"/>
<dbReference type="KEGG" id="hac:Hac_1170"/>
<dbReference type="eggNOG" id="COG2255">
    <property type="taxonomic scope" value="Bacteria"/>
</dbReference>
<dbReference type="HOGENOM" id="CLU_055599_1_0_7"/>
<dbReference type="OrthoDB" id="9804478at2"/>
<dbReference type="BioCyc" id="HACI382638:HAC_RS05045-MONOMER"/>
<dbReference type="Proteomes" id="UP000000775">
    <property type="component" value="Chromosome"/>
</dbReference>
<dbReference type="GO" id="GO:0005737">
    <property type="term" value="C:cytoplasm"/>
    <property type="evidence" value="ECO:0007669"/>
    <property type="project" value="UniProtKB-SubCell"/>
</dbReference>
<dbReference type="GO" id="GO:0048476">
    <property type="term" value="C:Holliday junction resolvase complex"/>
    <property type="evidence" value="ECO:0007669"/>
    <property type="project" value="UniProtKB-UniRule"/>
</dbReference>
<dbReference type="GO" id="GO:0005524">
    <property type="term" value="F:ATP binding"/>
    <property type="evidence" value="ECO:0007669"/>
    <property type="project" value="UniProtKB-UniRule"/>
</dbReference>
<dbReference type="GO" id="GO:0016887">
    <property type="term" value="F:ATP hydrolysis activity"/>
    <property type="evidence" value="ECO:0007669"/>
    <property type="project" value="InterPro"/>
</dbReference>
<dbReference type="GO" id="GO:0000400">
    <property type="term" value="F:four-way junction DNA binding"/>
    <property type="evidence" value="ECO:0007669"/>
    <property type="project" value="UniProtKB-UniRule"/>
</dbReference>
<dbReference type="GO" id="GO:0009378">
    <property type="term" value="F:four-way junction helicase activity"/>
    <property type="evidence" value="ECO:0007669"/>
    <property type="project" value="InterPro"/>
</dbReference>
<dbReference type="GO" id="GO:0006310">
    <property type="term" value="P:DNA recombination"/>
    <property type="evidence" value="ECO:0007669"/>
    <property type="project" value="UniProtKB-UniRule"/>
</dbReference>
<dbReference type="GO" id="GO:0006281">
    <property type="term" value="P:DNA repair"/>
    <property type="evidence" value="ECO:0007669"/>
    <property type="project" value="UniProtKB-UniRule"/>
</dbReference>
<dbReference type="CDD" id="cd00009">
    <property type="entry name" value="AAA"/>
    <property type="match status" value="1"/>
</dbReference>
<dbReference type="Gene3D" id="1.10.8.60">
    <property type="match status" value="1"/>
</dbReference>
<dbReference type="Gene3D" id="3.40.50.300">
    <property type="entry name" value="P-loop containing nucleotide triphosphate hydrolases"/>
    <property type="match status" value="1"/>
</dbReference>
<dbReference type="Gene3D" id="1.10.10.10">
    <property type="entry name" value="Winged helix-like DNA-binding domain superfamily/Winged helix DNA-binding domain"/>
    <property type="match status" value="1"/>
</dbReference>
<dbReference type="HAMAP" id="MF_00016">
    <property type="entry name" value="DNA_HJ_migration_RuvB"/>
    <property type="match status" value="1"/>
</dbReference>
<dbReference type="InterPro" id="IPR003593">
    <property type="entry name" value="AAA+_ATPase"/>
</dbReference>
<dbReference type="InterPro" id="IPR041445">
    <property type="entry name" value="AAA_lid_4"/>
</dbReference>
<dbReference type="InterPro" id="IPR004605">
    <property type="entry name" value="DNA_helicase_Holl-junc_RuvB"/>
</dbReference>
<dbReference type="InterPro" id="IPR027417">
    <property type="entry name" value="P-loop_NTPase"/>
</dbReference>
<dbReference type="InterPro" id="IPR008824">
    <property type="entry name" value="RuvB-like_N"/>
</dbReference>
<dbReference type="InterPro" id="IPR008823">
    <property type="entry name" value="RuvB_C"/>
</dbReference>
<dbReference type="InterPro" id="IPR036388">
    <property type="entry name" value="WH-like_DNA-bd_sf"/>
</dbReference>
<dbReference type="InterPro" id="IPR036390">
    <property type="entry name" value="WH_DNA-bd_sf"/>
</dbReference>
<dbReference type="NCBIfam" id="NF000868">
    <property type="entry name" value="PRK00080.1"/>
    <property type="match status" value="1"/>
</dbReference>
<dbReference type="NCBIfam" id="TIGR00635">
    <property type="entry name" value="ruvB"/>
    <property type="match status" value="1"/>
</dbReference>
<dbReference type="PANTHER" id="PTHR42848">
    <property type="match status" value="1"/>
</dbReference>
<dbReference type="PANTHER" id="PTHR42848:SF1">
    <property type="entry name" value="HOLLIDAY JUNCTION BRANCH MIGRATION COMPLEX SUBUNIT RUVB"/>
    <property type="match status" value="1"/>
</dbReference>
<dbReference type="Pfam" id="PF17864">
    <property type="entry name" value="AAA_lid_4"/>
    <property type="match status" value="1"/>
</dbReference>
<dbReference type="Pfam" id="PF05491">
    <property type="entry name" value="RuvB_C"/>
    <property type="match status" value="1"/>
</dbReference>
<dbReference type="Pfam" id="PF05496">
    <property type="entry name" value="RuvB_N"/>
    <property type="match status" value="1"/>
</dbReference>
<dbReference type="SMART" id="SM00382">
    <property type="entry name" value="AAA"/>
    <property type="match status" value="1"/>
</dbReference>
<dbReference type="SUPFAM" id="SSF52540">
    <property type="entry name" value="P-loop containing nucleoside triphosphate hydrolases"/>
    <property type="match status" value="1"/>
</dbReference>
<dbReference type="SUPFAM" id="SSF46785">
    <property type="entry name" value="Winged helix' DNA-binding domain"/>
    <property type="match status" value="1"/>
</dbReference>
<keyword id="KW-0067">ATP-binding</keyword>
<keyword id="KW-0963">Cytoplasm</keyword>
<keyword id="KW-0227">DNA damage</keyword>
<keyword id="KW-0233">DNA recombination</keyword>
<keyword id="KW-0234">DNA repair</keyword>
<keyword id="KW-0238">DNA-binding</keyword>
<keyword id="KW-0378">Hydrolase</keyword>
<keyword id="KW-0547">Nucleotide-binding</keyword>
<evidence type="ECO:0000255" key="1">
    <source>
        <dbReference type="HAMAP-Rule" id="MF_00016"/>
    </source>
</evidence>
<accession>Q17WP7</accession>
<name>RUVB_HELAH</name>
<proteinExistence type="inferred from homology"/>
<protein>
    <recommendedName>
        <fullName evidence="1">Holliday junction branch migration complex subunit RuvB</fullName>
        <ecNumber evidence="1">3.6.4.-</ecNumber>
    </recommendedName>
</protein>
<feature type="chain" id="PRO_1000001415" description="Holliday junction branch migration complex subunit RuvB">
    <location>
        <begin position="1"/>
        <end position="336"/>
    </location>
</feature>
<feature type="region of interest" description="Large ATPase domain (RuvB-L)" evidence="1">
    <location>
        <begin position="1"/>
        <end position="182"/>
    </location>
</feature>
<feature type="region of interest" description="Small ATPAse domain (RuvB-S)" evidence="1">
    <location>
        <begin position="183"/>
        <end position="253"/>
    </location>
</feature>
<feature type="region of interest" description="Head domain (RuvB-H)" evidence="1">
    <location>
        <begin position="256"/>
        <end position="336"/>
    </location>
</feature>
<feature type="binding site" evidence="1">
    <location>
        <position position="21"/>
    </location>
    <ligand>
        <name>ATP</name>
        <dbReference type="ChEBI" id="CHEBI:30616"/>
    </ligand>
</feature>
<feature type="binding site" evidence="1">
    <location>
        <position position="22"/>
    </location>
    <ligand>
        <name>ATP</name>
        <dbReference type="ChEBI" id="CHEBI:30616"/>
    </ligand>
</feature>
<feature type="binding site" evidence="1">
    <location>
        <position position="63"/>
    </location>
    <ligand>
        <name>ATP</name>
        <dbReference type="ChEBI" id="CHEBI:30616"/>
    </ligand>
</feature>
<feature type="binding site" evidence="1">
    <location>
        <position position="66"/>
    </location>
    <ligand>
        <name>ATP</name>
        <dbReference type="ChEBI" id="CHEBI:30616"/>
    </ligand>
</feature>
<feature type="binding site" evidence="1">
    <location>
        <position position="67"/>
    </location>
    <ligand>
        <name>ATP</name>
        <dbReference type="ChEBI" id="CHEBI:30616"/>
    </ligand>
</feature>
<feature type="binding site" evidence="1">
    <location>
        <position position="67"/>
    </location>
    <ligand>
        <name>Mg(2+)</name>
        <dbReference type="ChEBI" id="CHEBI:18420"/>
    </ligand>
</feature>
<feature type="binding site" evidence="1">
    <location>
        <position position="68"/>
    </location>
    <ligand>
        <name>ATP</name>
        <dbReference type="ChEBI" id="CHEBI:30616"/>
    </ligand>
</feature>
<feature type="binding site" evidence="1">
    <location>
        <begin position="129"/>
        <end position="131"/>
    </location>
    <ligand>
        <name>ATP</name>
        <dbReference type="ChEBI" id="CHEBI:30616"/>
    </ligand>
</feature>
<feature type="binding site" evidence="1">
    <location>
        <position position="172"/>
    </location>
    <ligand>
        <name>ATP</name>
        <dbReference type="ChEBI" id="CHEBI:30616"/>
    </ligand>
</feature>
<feature type="binding site" evidence="1">
    <location>
        <position position="182"/>
    </location>
    <ligand>
        <name>ATP</name>
        <dbReference type="ChEBI" id="CHEBI:30616"/>
    </ligand>
</feature>
<feature type="binding site" evidence="1">
    <location>
        <position position="219"/>
    </location>
    <ligand>
        <name>ATP</name>
        <dbReference type="ChEBI" id="CHEBI:30616"/>
    </ligand>
</feature>
<feature type="binding site" evidence="1">
    <location>
        <position position="310"/>
    </location>
    <ligand>
        <name>DNA</name>
        <dbReference type="ChEBI" id="CHEBI:16991"/>
    </ligand>
</feature>
<feature type="binding site" evidence="1">
    <location>
        <position position="315"/>
    </location>
    <ligand>
        <name>DNA</name>
        <dbReference type="ChEBI" id="CHEBI:16991"/>
    </ligand>
</feature>
<comment type="function">
    <text evidence="1">The RuvA-RuvB-RuvC complex processes Holliday junction (HJ) DNA during genetic recombination and DNA repair, while the RuvA-RuvB complex plays an important role in the rescue of blocked DNA replication forks via replication fork reversal (RFR). RuvA specifically binds to HJ cruciform DNA, conferring on it an open structure. The RuvB hexamer acts as an ATP-dependent pump, pulling dsDNA into and through the RuvAB complex. RuvB forms 2 homohexamers on either side of HJ DNA bound by 1 or 2 RuvA tetramers; 4 subunits per hexamer contact DNA at a time. Coordinated motions by a converter formed by DNA-disengaged RuvB subunits stimulates ATP hydrolysis and nucleotide exchange. Immobilization of the converter enables RuvB to convert the ATP-contained energy into a lever motion, pulling 2 nucleotides of DNA out of the RuvA tetramer per ATP hydrolyzed, thus driving DNA branch migration. The RuvB motors rotate together with the DNA substrate, which together with the progressing nucleotide cycle form the mechanistic basis for DNA recombination by continuous HJ branch migration. Branch migration allows RuvC to scan DNA until it finds its consensus sequence, where it cleaves and resolves cruciform DNA.</text>
</comment>
<comment type="catalytic activity">
    <reaction evidence="1">
        <text>ATP + H2O = ADP + phosphate + H(+)</text>
        <dbReference type="Rhea" id="RHEA:13065"/>
        <dbReference type="ChEBI" id="CHEBI:15377"/>
        <dbReference type="ChEBI" id="CHEBI:15378"/>
        <dbReference type="ChEBI" id="CHEBI:30616"/>
        <dbReference type="ChEBI" id="CHEBI:43474"/>
        <dbReference type="ChEBI" id="CHEBI:456216"/>
    </reaction>
</comment>
<comment type="subunit">
    <text evidence="1">Homohexamer. Forms an RuvA(8)-RuvB(12)-Holliday junction (HJ) complex. HJ DNA is sandwiched between 2 RuvA tetramers; dsDNA enters through RuvA and exits via RuvB. An RuvB hexamer assembles on each DNA strand where it exits the tetramer. Each RuvB hexamer is contacted by two RuvA subunits (via domain III) on 2 adjacent RuvB subunits; this complex drives branch migration. In the full resolvosome a probable DNA-RuvA(4)-RuvB(12)-RuvC(2) complex forms which resolves the HJ.</text>
</comment>
<comment type="subcellular location">
    <subcellularLocation>
        <location evidence="1">Cytoplasm</location>
    </subcellularLocation>
</comment>
<comment type="domain">
    <text evidence="1">Has 3 domains, the large (RuvB-L) and small ATPase (RuvB-S) domains and the C-terminal head (RuvB-H) domain. The head domain binds DNA, while the ATPase domains jointly bind ATP, ADP or are empty depending on the state of the subunit in the translocation cycle. During a single DNA translocation step the structure of each domain remains the same, but their relative positions change.</text>
</comment>
<comment type="similarity">
    <text evidence="1">Belongs to the RuvB family.</text>
</comment>